<gene>
    <name evidence="1" type="primary">ulaF</name>
    <name type="ordered locus">EcE24377A_4759</name>
</gene>
<protein>
    <recommendedName>
        <fullName evidence="1">L-ribulose-5-phosphate 4-epimerase UlaF</fullName>
        <ecNumber evidence="1">5.1.3.4</ecNumber>
    </recommendedName>
    <alternativeName>
        <fullName evidence="1">L-ascorbate utilization protein F</fullName>
    </alternativeName>
    <alternativeName>
        <fullName evidence="1">Phosphoribulose isomerase</fullName>
    </alternativeName>
</protein>
<evidence type="ECO:0000255" key="1">
    <source>
        <dbReference type="HAMAP-Rule" id="MF_01952"/>
    </source>
</evidence>
<name>ULAF_ECO24</name>
<feature type="chain" id="PRO_1000070636" description="L-ribulose-5-phosphate 4-epimerase UlaF">
    <location>
        <begin position="1"/>
        <end position="228"/>
    </location>
</feature>
<feature type="active site" description="Proton donor/acceptor" evidence="1">
    <location>
        <position position="118"/>
    </location>
</feature>
<feature type="active site" description="Proton donor/acceptor" evidence="1">
    <location>
        <position position="225"/>
    </location>
</feature>
<feature type="binding site" evidence="1">
    <location>
        <begin position="26"/>
        <end position="27"/>
    </location>
    <ligand>
        <name>substrate</name>
    </ligand>
</feature>
<feature type="binding site" evidence="1">
    <location>
        <begin position="43"/>
        <end position="44"/>
    </location>
    <ligand>
        <name>substrate</name>
    </ligand>
</feature>
<feature type="binding site" evidence="1">
    <location>
        <begin position="72"/>
        <end position="73"/>
    </location>
    <ligand>
        <name>substrate</name>
    </ligand>
</feature>
<feature type="binding site" evidence="1">
    <location>
        <position position="74"/>
    </location>
    <ligand>
        <name>Zn(2+)</name>
        <dbReference type="ChEBI" id="CHEBI:29105"/>
    </ligand>
</feature>
<feature type="binding site" evidence="1">
    <location>
        <position position="93"/>
    </location>
    <ligand>
        <name>Zn(2+)</name>
        <dbReference type="ChEBI" id="CHEBI:29105"/>
    </ligand>
</feature>
<feature type="binding site" evidence="1">
    <location>
        <position position="95"/>
    </location>
    <ligand>
        <name>Zn(2+)</name>
        <dbReference type="ChEBI" id="CHEBI:29105"/>
    </ligand>
</feature>
<feature type="binding site" evidence="1">
    <location>
        <position position="167"/>
    </location>
    <ligand>
        <name>Zn(2+)</name>
        <dbReference type="ChEBI" id="CHEBI:29105"/>
    </ligand>
</feature>
<organism>
    <name type="scientific">Escherichia coli O139:H28 (strain E24377A / ETEC)</name>
    <dbReference type="NCBI Taxonomy" id="331111"/>
    <lineage>
        <taxon>Bacteria</taxon>
        <taxon>Pseudomonadati</taxon>
        <taxon>Pseudomonadota</taxon>
        <taxon>Gammaproteobacteria</taxon>
        <taxon>Enterobacterales</taxon>
        <taxon>Enterobacteriaceae</taxon>
        <taxon>Escherichia</taxon>
    </lineage>
</organism>
<sequence length="228" mass="25398">MQKLKQQVFEANMDLPRYGLVTFTWGNVSAIDRERGLVVIKPSGVAYETMKADDMVVVDMSGKVVEGEYRPSSDTATHLELYRRYPSLGGIVHTHSTHATAWAQAGLAIPALGTTHADYFFGDIPYTRGLSEEEVQGEYELNTGKVIIETLGNAEPLHTPGIVVYQHGPFAWGKDAHDAVHNAVVMEEVAKMAWIARSINPQLNHIDSFLMNKHFMRKHGPNAYYGQK</sequence>
<reference key="1">
    <citation type="journal article" date="2008" name="J. Bacteriol.">
        <title>The pangenome structure of Escherichia coli: comparative genomic analysis of E. coli commensal and pathogenic isolates.</title>
        <authorList>
            <person name="Rasko D.A."/>
            <person name="Rosovitz M.J."/>
            <person name="Myers G.S.A."/>
            <person name="Mongodin E.F."/>
            <person name="Fricke W.F."/>
            <person name="Gajer P."/>
            <person name="Crabtree J."/>
            <person name="Sebaihia M."/>
            <person name="Thomson N.R."/>
            <person name="Chaudhuri R."/>
            <person name="Henderson I.R."/>
            <person name="Sperandio V."/>
            <person name="Ravel J."/>
        </authorList>
    </citation>
    <scope>NUCLEOTIDE SEQUENCE [LARGE SCALE GENOMIC DNA]</scope>
    <source>
        <strain>E24377A / ETEC</strain>
    </source>
</reference>
<comment type="function">
    <text evidence="1">Catalyzes the isomerization of L-ribulose 5-phosphate to D-xylulose 5-phosphate. Is involved in the anaerobic L-ascorbate utilization.</text>
</comment>
<comment type="catalytic activity">
    <reaction evidence="1">
        <text>L-ribulose 5-phosphate = D-xylulose 5-phosphate</text>
        <dbReference type="Rhea" id="RHEA:22368"/>
        <dbReference type="ChEBI" id="CHEBI:57737"/>
        <dbReference type="ChEBI" id="CHEBI:58226"/>
        <dbReference type="EC" id="5.1.3.4"/>
    </reaction>
</comment>
<comment type="cofactor">
    <cofactor evidence="1">
        <name>Zn(2+)</name>
        <dbReference type="ChEBI" id="CHEBI:29105"/>
    </cofactor>
    <text evidence="1">Binds 1 zinc ion per subunit.</text>
</comment>
<comment type="pathway">
    <text evidence="1">Cofactor degradation; L-ascorbate degradation; D-xylulose 5-phosphate from L-ascorbate: step 4/4.</text>
</comment>
<comment type="induction">
    <text evidence="1">Induced by L-ascorbate. Repressed by UlaR.</text>
</comment>
<comment type="similarity">
    <text evidence="1">Belongs to the aldolase class II family. AraD/FucA subfamily.</text>
</comment>
<accession>A7ZV69</accession>
<proteinExistence type="inferred from homology"/>
<keyword id="KW-0119">Carbohydrate metabolism</keyword>
<keyword id="KW-0413">Isomerase</keyword>
<keyword id="KW-0479">Metal-binding</keyword>
<keyword id="KW-1185">Reference proteome</keyword>
<keyword id="KW-0862">Zinc</keyword>
<dbReference type="EC" id="5.1.3.4" evidence="1"/>
<dbReference type="EMBL" id="CP000800">
    <property type="protein sequence ID" value="ABV16756.1"/>
    <property type="molecule type" value="Genomic_DNA"/>
</dbReference>
<dbReference type="RefSeq" id="WP_001170816.1">
    <property type="nucleotide sequence ID" value="NC_009801.1"/>
</dbReference>
<dbReference type="SMR" id="A7ZV69"/>
<dbReference type="KEGG" id="ecw:EcE24377A_4759"/>
<dbReference type="HOGENOM" id="CLU_006033_5_0_6"/>
<dbReference type="UniPathway" id="UPA00263">
    <property type="reaction ID" value="UER00380"/>
</dbReference>
<dbReference type="Proteomes" id="UP000001122">
    <property type="component" value="Chromosome"/>
</dbReference>
<dbReference type="GO" id="GO:0005829">
    <property type="term" value="C:cytosol"/>
    <property type="evidence" value="ECO:0007669"/>
    <property type="project" value="TreeGrafter"/>
</dbReference>
<dbReference type="GO" id="GO:0016832">
    <property type="term" value="F:aldehyde-lyase activity"/>
    <property type="evidence" value="ECO:0007669"/>
    <property type="project" value="TreeGrafter"/>
</dbReference>
<dbReference type="GO" id="GO:0008742">
    <property type="term" value="F:L-ribulose-phosphate 4-epimerase activity"/>
    <property type="evidence" value="ECO:0007669"/>
    <property type="project" value="UniProtKB-UniRule"/>
</dbReference>
<dbReference type="GO" id="GO:0008270">
    <property type="term" value="F:zinc ion binding"/>
    <property type="evidence" value="ECO:0007669"/>
    <property type="project" value="UniProtKB-UniRule"/>
</dbReference>
<dbReference type="GO" id="GO:0019854">
    <property type="term" value="P:L-ascorbic acid catabolic process"/>
    <property type="evidence" value="ECO:0007669"/>
    <property type="project" value="UniProtKB-UniRule"/>
</dbReference>
<dbReference type="GO" id="GO:0019323">
    <property type="term" value="P:pentose catabolic process"/>
    <property type="evidence" value="ECO:0007669"/>
    <property type="project" value="TreeGrafter"/>
</dbReference>
<dbReference type="CDD" id="cd00398">
    <property type="entry name" value="Aldolase_II"/>
    <property type="match status" value="1"/>
</dbReference>
<dbReference type="FunFam" id="3.40.225.10:FF:000001">
    <property type="entry name" value="L-ribulose-5-phosphate 4-epimerase UlaF"/>
    <property type="match status" value="1"/>
</dbReference>
<dbReference type="Gene3D" id="3.40.225.10">
    <property type="entry name" value="Class II aldolase/adducin N-terminal domain"/>
    <property type="match status" value="1"/>
</dbReference>
<dbReference type="HAMAP" id="MF_01952">
    <property type="entry name" value="UlaF"/>
    <property type="match status" value="1"/>
</dbReference>
<dbReference type="InterPro" id="IPR050197">
    <property type="entry name" value="Aldolase_class_II_sugar_metab"/>
</dbReference>
<dbReference type="InterPro" id="IPR001303">
    <property type="entry name" value="Aldolase_II/adducin_N"/>
</dbReference>
<dbReference type="InterPro" id="IPR036409">
    <property type="entry name" value="Aldolase_II/adducin_N_sf"/>
</dbReference>
<dbReference type="InterPro" id="IPR023499">
    <property type="entry name" value="UlaF"/>
</dbReference>
<dbReference type="NCBIfam" id="NF006047">
    <property type="entry name" value="PRK08193.1"/>
    <property type="match status" value="1"/>
</dbReference>
<dbReference type="NCBIfam" id="NF009003">
    <property type="entry name" value="PRK12348.1"/>
    <property type="match status" value="1"/>
</dbReference>
<dbReference type="PANTHER" id="PTHR22789">
    <property type="entry name" value="FUCULOSE PHOSPHATE ALDOLASE"/>
    <property type="match status" value="1"/>
</dbReference>
<dbReference type="PANTHER" id="PTHR22789:SF9">
    <property type="entry name" value="L-RIBULOSE-5-PHOSPHATE 4-EPIMERASE ULAF"/>
    <property type="match status" value="1"/>
</dbReference>
<dbReference type="Pfam" id="PF00596">
    <property type="entry name" value="Aldolase_II"/>
    <property type="match status" value="1"/>
</dbReference>
<dbReference type="SMART" id="SM01007">
    <property type="entry name" value="Aldolase_II"/>
    <property type="match status" value="1"/>
</dbReference>
<dbReference type="SUPFAM" id="SSF53639">
    <property type="entry name" value="AraD/HMP-PK domain-like"/>
    <property type="match status" value="1"/>
</dbReference>